<protein>
    <recommendedName>
        <fullName evidence="1">Sodium/nucleoside cotransporter 1</fullName>
    </recommendedName>
    <alternativeName>
        <fullName>Concentrative nucleoside transporter 1</fullName>
        <shortName>CNT 1</shortName>
    </alternativeName>
    <alternativeName>
        <fullName>Na(+)/nucleoside cotransporter 1</fullName>
    </alternativeName>
    <alternativeName>
        <fullName>Sodium-coupled nucleoside transporter 1</fullName>
    </alternativeName>
    <alternativeName>
        <fullName>Solute carrier family 28 member 1</fullName>
    </alternativeName>
</protein>
<reference key="1">
    <citation type="journal article" date="1998" name="Biochim. Biophys. Acta">
        <title>Sequence of a pyrimidine-selective Na+/nucleoside cotransporter from pig kidney, pkCNT1.</title>
        <authorList>
            <person name="Pajor A.M."/>
        </authorList>
    </citation>
    <scope>NUCLEOTIDE SEQUENCE [MRNA]</scope>
    <scope>FUNCTION</scope>
    <scope>TRANSPORTER ACTIVITY</scope>
    <scope>SUBCELLULAR LOCATION</scope>
    <source>
        <tissue>Kidney cortex</tissue>
    </source>
</reference>
<name>S28A1_PIG</name>
<comment type="function">
    <text evidence="1">Sodium and pyrimidine nucleoside symporter of the plasma membrane that imports uridine, thymidine and cytidine into cells by coupling their transport to the transmembrane sodium electrochemical gradient. Also transports adenosine, an atypical substrate transported with high apparent affinity, but low maximum velocity. Therefore, exhibits the transport characteristics of the nucleoside transport system cit or N2 subtype (N2/cit). Involved in renal nucleoside (re)absorption.</text>
</comment>
<comment type="catalytic activity">
    <reaction evidence="5">
        <text>uridine(out) + Na(+)(out) = uridine(in) + Na(+)(in)</text>
        <dbReference type="Rhea" id="RHEA:69887"/>
        <dbReference type="ChEBI" id="CHEBI:16704"/>
        <dbReference type="ChEBI" id="CHEBI:29101"/>
    </reaction>
</comment>
<comment type="catalytic activity">
    <reaction evidence="5">
        <text>thymidine(out) + Na(+)(out) = thymidine(in) + Na(+)(in)</text>
        <dbReference type="Rhea" id="RHEA:69891"/>
        <dbReference type="ChEBI" id="CHEBI:17748"/>
        <dbReference type="ChEBI" id="CHEBI:29101"/>
    </reaction>
</comment>
<comment type="catalytic activity">
    <reaction evidence="1">
        <text>cytidine(out) + Na(+)(out) = cytidine(in) + Na(+)(in)</text>
        <dbReference type="Rhea" id="RHEA:69895"/>
        <dbReference type="ChEBI" id="CHEBI:17562"/>
        <dbReference type="ChEBI" id="CHEBI:29101"/>
    </reaction>
</comment>
<comment type="catalytic activity">
    <reaction evidence="1">
        <text>adenosine(out) + Na(+)(out) = adenosine(in) + Na(+)(in)</text>
        <dbReference type="Rhea" id="RHEA:69927"/>
        <dbReference type="ChEBI" id="CHEBI:16335"/>
        <dbReference type="ChEBI" id="CHEBI:29101"/>
    </reaction>
</comment>
<comment type="activity regulation">
    <text evidence="1">Due to its high apparent affinity but slow transport, adenosine could act as a negative regulator of pyrimidine transport under some conditions.</text>
</comment>
<comment type="subcellular location">
    <subcellularLocation>
        <location evidence="5">Cell membrane</location>
        <topology evidence="2">Multi-pass membrane protein</topology>
    </subcellularLocation>
    <subcellularLocation>
        <location evidence="1">Apical cell membrane</location>
        <topology evidence="2">Multi-pass membrane protein</topology>
    </subcellularLocation>
</comment>
<comment type="PTM">
    <text evidence="1">N-glycosylated. N-glycosylation is required for localization to the plasma membrane and the transporter activity.</text>
</comment>
<comment type="similarity">
    <text evidence="7">Belongs to the concentrative nucleoside transporter (CNT) (TC 2.A.41) family.</text>
</comment>
<evidence type="ECO:0000250" key="1">
    <source>
        <dbReference type="UniProtKB" id="O00337"/>
    </source>
</evidence>
<evidence type="ECO:0000250" key="2">
    <source>
        <dbReference type="UniProtKB" id="Q62674"/>
    </source>
</evidence>
<evidence type="ECO:0000255" key="3"/>
<evidence type="ECO:0000256" key="4">
    <source>
        <dbReference type="SAM" id="MobiDB-lite"/>
    </source>
</evidence>
<evidence type="ECO:0000269" key="5">
    <source>
    </source>
</evidence>
<evidence type="ECO:0000303" key="6">
    <source>
    </source>
</evidence>
<evidence type="ECO:0000305" key="7"/>
<keyword id="KW-1003">Cell membrane</keyword>
<keyword id="KW-0325">Glycoprotein</keyword>
<keyword id="KW-0472">Membrane</keyword>
<keyword id="KW-1185">Reference proteome</keyword>
<keyword id="KW-0769">Symport</keyword>
<keyword id="KW-0812">Transmembrane</keyword>
<keyword id="KW-1133">Transmembrane helix</keyword>
<keyword id="KW-0813">Transport</keyword>
<gene>
    <name type="primary">SLC28A1</name>
    <name type="synonym">CNT1</name>
    <name evidence="6" type="synonym">pkCNT1</name>
</gene>
<dbReference type="EMBL" id="AF009673">
    <property type="protein sequence ID" value="AAC17947.1"/>
    <property type="molecule type" value="mRNA"/>
</dbReference>
<dbReference type="RefSeq" id="NP_999277.1">
    <property type="nucleotide sequence ID" value="NM_214112.1"/>
</dbReference>
<dbReference type="SMR" id="O62667"/>
<dbReference type="FunCoup" id="O62667">
    <property type="interactions" value="23"/>
</dbReference>
<dbReference type="STRING" id="9823.ENSSSCP00000033108"/>
<dbReference type="GlyCosmos" id="O62667">
    <property type="glycosylation" value="2 sites, No reported glycans"/>
</dbReference>
<dbReference type="GlyGen" id="O62667">
    <property type="glycosylation" value="2 sites"/>
</dbReference>
<dbReference type="PaxDb" id="9823-ENSSSCP00000002842"/>
<dbReference type="GeneID" id="397200"/>
<dbReference type="KEGG" id="ssc:397200"/>
<dbReference type="CTD" id="9154"/>
<dbReference type="eggNOG" id="KOG3747">
    <property type="taxonomic scope" value="Eukaryota"/>
</dbReference>
<dbReference type="InParanoid" id="O62667"/>
<dbReference type="OrthoDB" id="6075923at2759"/>
<dbReference type="Proteomes" id="UP000008227">
    <property type="component" value="Unplaced"/>
</dbReference>
<dbReference type="Proteomes" id="UP000314985">
    <property type="component" value="Unplaced"/>
</dbReference>
<dbReference type="Proteomes" id="UP000694570">
    <property type="component" value="Unplaced"/>
</dbReference>
<dbReference type="Proteomes" id="UP000694571">
    <property type="component" value="Unplaced"/>
</dbReference>
<dbReference type="Proteomes" id="UP000694720">
    <property type="component" value="Unplaced"/>
</dbReference>
<dbReference type="Proteomes" id="UP000694722">
    <property type="component" value="Unplaced"/>
</dbReference>
<dbReference type="Proteomes" id="UP000694723">
    <property type="component" value="Unplaced"/>
</dbReference>
<dbReference type="Proteomes" id="UP000694724">
    <property type="component" value="Unplaced"/>
</dbReference>
<dbReference type="Proteomes" id="UP000694725">
    <property type="component" value="Unplaced"/>
</dbReference>
<dbReference type="Proteomes" id="UP000694726">
    <property type="component" value="Unplaced"/>
</dbReference>
<dbReference type="Proteomes" id="UP000694727">
    <property type="component" value="Unplaced"/>
</dbReference>
<dbReference type="Proteomes" id="UP000694728">
    <property type="component" value="Unplaced"/>
</dbReference>
<dbReference type="GO" id="GO:0016324">
    <property type="term" value="C:apical plasma membrane"/>
    <property type="evidence" value="ECO:0000250"/>
    <property type="project" value="UniProtKB"/>
</dbReference>
<dbReference type="GO" id="GO:0005886">
    <property type="term" value="C:plasma membrane"/>
    <property type="evidence" value="ECO:0000314"/>
    <property type="project" value="UniProtKB"/>
</dbReference>
<dbReference type="GO" id="GO:0015389">
    <property type="term" value="F:pyrimidine- and adenosine-specific:sodium symporter activity"/>
    <property type="evidence" value="ECO:0000314"/>
    <property type="project" value="UniProtKB"/>
</dbReference>
<dbReference type="GO" id="GO:0015861">
    <property type="term" value="P:cytidine transport"/>
    <property type="evidence" value="ECO:0000250"/>
    <property type="project" value="UniProtKB"/>
</dbReference>
<dbReference type="GO" id="GO:0180015">
    <property type="term" value="P:nucleoside import across plasma membrane"/>
    <property type="evidence" value="ECO:0000250"/>
    <property type="project" value="UniProtKB"/>
</dbReference>
<dbReference type="GO" id="GO:0015855">
    <property type="term" value="P:pyrimidine nucleobase transport"/>
    <property type="evidence" value="ECO:0000318"/>
    <property type="project" value="GO_Central"/>
</dbReference>
<dbReference type="GO" id="GO:0015862">
    <property type="term" value="P:uridine transmembrane transport"/>
    <property type="evidence" value="ECO:0000250"/>
    <property type="project" value="UniProtKB"/>
</dbReference>
<dbReference type="InterPro" id="IPR008276">
    <property type="entry name" value="C_nuclsd_transpt"/>
</dbReference>
<dbReference type="InterPro" id="IPR018270">
    <property type="entry name" value="C_nuclsd_transpt_met_bac"/>
</dbReference>
<dbReference type="InterPro" id="IPR011657">
    <property type="entry name" value="CNT_C_dom"/>
</dbReference>
<dbReference type="InterPro" id="IPR002668">
    <property type="entry name" value="CNT_N_dom"/>
</dbReference>
<dbReference type="InterPro" id="IPR011642">
    <property type="entry name" value="Gate_dom"/>
</dbReference>
<dbReference type="NCBIfam" id="TIGR00804">
    <property type="entry name" value="nupC"/>
    <property type="match status" value="1"/>
</dbReference>
<dbReference type="PANTHER" id="PTHR10590">
    <property type="entry name" value="SODIUM/NUCLEOSIDE COTRANSPORTER"/>
    <property type="match status" value="1"/>
</dbReference>
<dbReference type="PANTHER" id="PTHR10590:SF16">
    <property type="entry name" value="SODIUM_NUCLEOSIDE COTRANSPORTER 1"/>
    <property type="match status" value="1"/>
</dbReference>
<dbReference type="Pfam" id="PF07670">
    <property type="entry name" value="Gate"/>
    <property type="match status" value="1"/>
</dbReference>
<dbReference type="Pfam" id="PF07662">
    <property type="entry name" value="Nucleos_tra2_C"/>
    <property type="match status" value="1"/>
</dbReference>
<dbReference type="Pfam" id="PF01773">
    <property type="entry name" value="Nucleos_tra2_N"/>
    <property type="match status" value="1"/>
</dbReference>
<proteinExistence type="evidence at transcript level"/>
<organism>
    <name type="scientific">Sus scrofa</name>
    <name type="common">Pig</name>
    <dbReference type="NCBI Taxonomy" id="9823"/>
    <lineage>
        <taxon>Eukaryota</taxon>
        <taxon>Metazoa</taxon>
        <taxon>Chordata</taxon>
        <taxon>Craniata</taxon>
        <taxon>Vertebrata</taxon>
        <taxon>Euteleostomi</taxon>
        <taxon>Mammalia</taxon>
        <taxon>Eutheria</taxon>
        <taxon>Laurasiatheria</taxon>
        <taxon>Artiodactyla</taxon>
        <taxon>Suina</taxon>
        <taxon>Suidae</taxon>
        <taxon>Sus</taxon>
    </lineage>
</organism>
<accession>O62667</accession>
<feature type="chain" id="PRO_0000070447" description="Sodium/nucleoside cotransporter 1">
    <location>
        <begin position="1"/>
        <end position="647"/>
    </location>
</feature>
<feature type="topological domain" description="Cytoplasmic" evidence="2">
    <location>
        <begin position="1"/>
        <end position="79"/>
    </location>
</feature>
<feature type="transmembrane region" description="Helical" evidence="3">
    <location>
        <begin position="80"/>
        <end position="103"/>
    </location>
</feature>
<feature type="topological domain" description="Extracellular" evidence="2">
    <location>
        <begin position="104"/>
        <end position="108"/>
    </location>
</feature>
<feature type="transmembrane region" description="Helical" evidence="3">
    <location>
        <begin position="109"/>
        <end position="127"/>
    </location>
</feature>
<feature type="topological domain" description="Cytoplasmic" evidence="2">
    <location>
        <begin position="128"/>
        <end position="146"/>
    </location>
</feature>
<feature type="transmembrane region" description="Helical" evidence="3">
    <location>
        <begin position="147"/>
        <end position="166"/>
    </location>
</feature>
<feature type="topological domain" description="Extracellular" evidence="2">
    <location>
        <begin position="167"/>
        <end position="177"/>
    </location>
</feature>
<feature type="transmembrane region" description="Helical" evidence="3">
    <location>
        <begin position="178"/>
        <end position="194"/>
    </location>
</feature>
<feature type="topological domain" description="Cytoplasmic" evidence="2">
    <location>
        <begin position="195"/>
        <end position="200"/>
    </location>
</feature>
<feature type="transmembrane region" description="Helical" evidence="3">
    <location>
        <begin position="201"/>
        <end position="221"/>
    </location>
</feature>
<feature type="topological domain" description="Extracellular" evidence="2">
    <location>
        <begin position="222"/>
        <end position="260"/>
    </location>
</feature>
<feature type="transmembrane region" description="Helical" evidence="3">
    <location>
        <begin position="261"/>
        <end position="282"/>
    </location>
</feature>
<feature type="topological domain" description="Cytoplasmic" evidence="2">
    <location>
        <begin position="283"/>
        <end position="293"/>
    </location>
</feature>
<feature type="transmembrane region" description="Helical" evidence="3">
    <location>
        <begin position="294"/>
        <end position="317"/>
    </location>
</feature>
<feature type="topological domain" description="Extracellular" evidence="2">
    <location>
        <begin position="318"/>
        <end position="336"/>
    </location>
</feature>
<feature type="transmembrane region" description="Helical" evidence="3">
    <location>
        <begin position="337"/>
        <end position="359"/>
    </location>
</feature>
<feature type="topological domain" description="Cytoplasmic" evidence="2">
    <location>
        <begin position="360"/>
        <end position="365"/>
    </location>
</feature>
<feature type="transmembrane region" description="Helical" evidence="3">
    <location>
        <begin position="366"/>
        <end position="385"/>
    </location>
</feature>
<feature type="topological domain" description="Extracellular" evidence="2">
    <location>
        <begin position="386"/>
        <end position="422"/>
    </location>
</feature>
<feature type="transmembrane region" description="Helical" evidence="3">
    <location>
        <begin position="423"/>
        <end position="445"/>
    </location>
</feature>
<feature type="topological domain" description="Cytoplasmic" evidence="2">
    <location>
        <begin position="446"/>
        <end position="456"/>
    </location>
</feature>
<feature type="transmembrane region" description="Helical" evidence="3">
    <location>
        <begin position="457"/>
        <end position="478"/>
    </location>
</feature>
<feature type="topological domain" description="Extracellular" evidence="2">
    <location>
        <begin position="479"/>
        <end position="533"/>
    </location>
</feature>
<feature type="transmembrane region" description="Helical" evidence="3">
    <location>
        <begin position="534"/>
        <end position="557"/>
    </location>
</feature>
<feature type="topological domain" description="Cytoplasmic" evidence="2">
    <location>
        <begin position="558"/>
        <end position="568"/>
    </location>
</feature>
<feature type="transmembrane region" description="Helical" evidence="3">
    <location>
        <begin position="569"/>
        <end position="591"/>
    </location>
</feature>
<feature type="topological domain" description="Extracellular" evidence="2">
    <location>
        <begin position="592"/>
        <end position="647"/>
    </location>
</feature>
<feature type="region of interest" description="Disordered" evidence="4">
    <location>
        <begin position="34"/>
        <end position="58"/>
    </location>
</feature>
<feature type="glycosylation site" description="N-linked (GlcNAc...) asparagine" evidence="3">
    <location>
        <position position="604"/>
    </location>
</feature>
<feature type="glycosylation site" description="N-linked (GlcNAc...) asparagine" evidence="3">
    <location>
        <position position="642"/>
    </location>
</feature>
<sequence>MEDNTPRQRDPISLTSVANGLENMGAELLESLEEGRAPGSDSSPAEVGGGWSKAGPEHLGRRSLQPALRVRRFCREHTQLFRWICTGLLCTAFAAFLLIACLLDFQRALALFVLFCVVLFFLAHSLLKRLLGPKLLRCVKPLRHPCLNLWFKRGLALAAFLGLVLWLVLDTAQRPEQLVSFGGICVFILLLFAGSKHHRAVSWRAVSWGLGLQFALGLFVIRTEPGFIAFQWLGDQIQIFLSYTEAGSSFVFGEALVKDVFAFQVLPIIVFFSCAMSVLYYVGLMQWVILKISWLMQATMGTTATETLSVAGNIFVSQTEAPLLIRPYLADMTLSEIHVVMTGGYATIAGSLLGAYISFGIDAASLIAASVMAAPCALALSKLVYPEVEESKFKREEGVKLTYGDAQNLLEAASSGAAMSVRVVTNIAANLIAFLAVLAFINAALSWLGDMVDVQGLSFQLICSYVLRPVAFLMGVAWEDCPVVAELLGMKLFLNEFVAYQELSGYKQRRLAGAEEWVGSRKQWISVRAEILTTYALCGFANFSSIGIMLGGLTSMVPQRKGDFSQIVLRALCTGACVSLVNACVAGILYVPRGAEVDCVSFLNTTLSSSSFEVYQCCRQFFQSTSLEFSPEALDNCCRFYNHTICV</sequence>